<name>TGM5_HUMAN</name>
<keyword id="KW-0007">Acetylation</keyword>
<keyword id="KW-0012">Acyltransferase</keyword>
<keyword id="KW-0025">Alternative splicing</keyword>
<keyword id="KW-0106">Calcium</keyword>
<keyword id="KW-0963">Cytoplasm</keyword>
<keyword id="KW-0903">Direct protein sequencing</keyword>
<keyword id="KW-0225">Disease variant</keyword>
<keyword id="KW-0479">Metal-binding</keyword>
<keyword id="KW-1267">Proteomics identification</keyword>
<keyword id="KW-1185">Reference proteome</keyword>
<keyword id="KW-0808">Transferase</keyword>
<proteinExistence type="evidence at protein level"/>
<evidence type="ECO:0000250" key="1"/>
<evidence type="ECO:0000255" key="2">
    <source>
        <dbReference type="PROSITE-ProRule" id="PRU10024"/>
    </source>
</evidence>
<evidence type="ECO:0000256" key="3">
    <source>
        <dbReference type="SAM" id="MobiDB-lite"/>
    </source>
</evidence>
<evidence type="ECO:0000269" key="4">
    <source>
    </source>
</evidence>
<evidence type="ECO:0000269" key="5">
    <source>
    </source>
</evidence>
<evidence type="ECO:0000269" key="6">
    <source>
    </source>
</evidence>
<evidence type="ECO:0000303" key="7">
    <source>
    </source>
</evidence>
<evidence type="ECO:0000305" key="8"/>
<sequence>MAQGLEVALTDLQSSRNNVRHHTEEITVDHLLVRRGQAFNLTLYFRNRSFQPGLDNIIFVVETGPLPDLALGTRAVFSLARHHSPSPWIAWLETNGATSTEVSLCAPPTAAVGRYLLKIHIDSFQGSVTAYQLGEFILLFNPWCPEDAVYLDSEPQRQEYVMNDYGFIYQGSKNWIRPCPWNYGQFEDKIIDICLKLLDKSLHFQTDPATDCALRGSPVYVSRVVCAMINSNDDNGVLNGNWSENYTDGANPAEWTGSVAILKQWNATGCQPVRYGQCWVFAAVMCTVMRCLGIPTRVITNFDSGHDTDGNLIIDEYYDNTGRILGNKKKDTIWNFHVWNECWMARKDLPPAYGGWQVLDATPQEMSNGVYCCGPASVRAIKEGEVDLNYDTPFVFSMVNADCMSWLVQGGKEQKLHQDTSSVGNFISTKSIQSDERDDITENYKYEEGSLQERQVFLKALQKLKARSFHGSQRGAELQPSRPTSLSQDSPRSLHTPSLRPSDVVQVSLKFKLLDPPNMGQDICFVLLALNMSSQFKDLKVNLSAQSLLHDGSPLSPFWQDTAFITLSPKEAKTYPCKISYSQYSQYLSTDKLIRISALGEEKSSPEKILVNKIITLSYPSITINVLGAAVVNQPLSIQVIFSNPLSEQVEDCVLTVEGSGLFKKQQKVFLGVLKPQHQASIILETVPFKSGQRQIQANMRSNKFKDIKGYRNVYVDFAL</sequence>
<reference key="1">
    <citation type="journal article" date="1998" name="J. Biol. Chem.">
        <title>Isolation of a cDNA encoding a novel member of the transglutaminase gene family from human keratinocytes. Detection and identification of transglutaminase gene products based on reverse transcription-polymerase chain reaction with degenerate primers.</title>
        <authorList>
            <person name="Aeschlimann D."/>
            <person name="Koeller M.K."/>
            <person name="Allen-Hoffmann B.L."/>
            <person name="Mosher D.F."/>
        </authorList>
    </citation>
    <scope>NUCLEOTIDE SEQUENCE [MRNA] (ISOFORMS LONG AND SHORT)</scope>
    <source>
        <tissue>Foreskin</tissue>
    </source>
</reference>
<reference key="2">
    <citation type="journal article" date="2001" name="J. Biol. Chem.">
        <title>Evolution of transglutaminase genes: identification of a transglutaminase gene cluster on human chromosome 15q15. Structure of the gene encoding transglutaminase X and a novel gene family member, transglutaminase Z.</title>
        <authorList>
            <person name="Grenard P."/>
            <person name="Bates M.K."/>
            <person name="Aeschlimann D."/>
        </authorList>
    </citation>
    <scope>NUCLEOTIDE SEQUENCE [GENOMIC DNA]</scope>
    <scope>VARIANTS SER-67 AND GLY-352</scope>
</reference>
<reference key="3">
    <citation type="journal article" date="2004" name="Genome Res.">
        <title>The status, quality, and expansion of the NIH full-length cDNA project: the Mammalian Gene Collection (MGC).</title>
        <authorList>
            <consortium name="The MGC Project Team"/>
        </authorList>
    </citation>
    <scope>NUCLEOTIDE SEQUENCE [LARGE SCALE MRNA] (ISOFORM LONG)</scope>
</reference>
<reference key="4">
    <citation type="journal article" date="2004" name="Amino Acids">
        <title>Transglutaminase 5 is acetylated at the N-terminal end.</title>
        <authorList>
            <person name="Rufini A."/>
            <person name="Vilbois F."/>
            <person name="Paradisi A."/>
            <person name="Oddi S."/>
            <person name="Tartaglione R."/>
            <person name="Leta A."/>
            <person name="Bagetta G."/>
            <person name="Guerrieri P."/>
            <person name="Finazzi-Agro' A."/>
            <person name="Melino G."/>
            <person name="Candi E."/>
        </authorList>
    </citation>
    <scope>PROTEIN SEQUENCE OF 2-16</scope>
    <scope>SUBCELLULAR LOCATION</scope>
    <scope>ACETYLATION AT ALA-2</scope>
    <scope>INDUCTION BY TPA AND CALCIUM</scope>
    <scope>IDENTIFICATION BY MASS SPECTROMETRY</scope>
</reference>
<reference key="5">
    <citation type="journal article" date="2005" name="Am. J. Hum. Genet.">
        <title>A homozygous missense mutation in TGM5 abolishes epidermal transglutaminase 5 activity and causes acral peeling skin syndrome.</title>
        <authorList>
            <person name="Cassidy A.J."/>
            <person name="van Steensel M.A.M."/>
            <person name="Steijlen P.M."/>
            <person name="van Geel M."/>
            <person name="van der Velden J."/>
            <person name="Morley S.M."/>
            <person name="Terrinoni A."/>
            <person name="Melino G."/>
            <person name="Candi E."/>
            <person name="McLean W.H.I."/>
        </authorList>
    </citation>
    <scope>VARIANT PSS2 CYS-113</scope>
    <scope>VARIANT MET-109</scope>
    <scope>CHARACTERIZATION OF VARIANT PSS2 CYS-113</scope>
    <scope>CHARACTERIZATION OF VARIANT MET-109</scope>
</reference>
<accession>O43548</accession>
<accession>O43549</accession>
<accession>Q0VF40</accession>
<accession>Q9UEZ4</accession>
<dbReference type="EC" id="2.3.2.13"/>
<dbReference type="EMBL" id="AF035960">
    <property type="protein sequence ID" value="AAC02978.1"/>
    <property type="molecule type" value="mRNA"/>
</dbReference>
<dbReference type="EMBL" id="AF035961">
    <property type="protein sequence ID" value="AAC02979.1"/>
    <property type="molecule type" value="mRNA"/>
</dbReference>
<dbReference type="EMBL" id="AF206510">
    <property type="protein sequence ID" value="AAF23981.1"/>
    <property type="molecule type" value="Genomic_DNA"/>
</dbReference>
<dbReference type="EMBL" id="AF206502">
    <property type="protein sequence ID" value="AAF23981.1"/>
    <property type="status" value="JOINED"/>
    <property type="molecule type" value="Genomic_DNA"/>
</dbReference>
<dbReference type="EMBL" id="AF206503">
    <property type="protein sequence ID" value="AAF23981.1"/>
    <property type="status" value="JOINED"/>
    <property type="molecule type" value="Genomic_DNA"/>
</dbReference>
<dbReference type="EMBL" id="AF206504">
    <property type="protein sequence ID" value="AAF23981.1"/>
    <property type="status" value="JOINED"/>
    <property type="molecule type" value="Genomic_DNA"/>
</dbReference>
<dbReference type="EMBL" id="AF206505">
    <property type="protein sequence ID" value="AAF23981.1"/>
    <property type="status" value="JOINED"/>
    <property type="molecule type" value="Genomic_DNA"/>
</dbReference>
<dbReference type="EMBL" id="AF206506">
    <property type="protein sequence ID" value="AAF23981.1"/>
    <property type="status" value="JOINED"/>
    <property type="molecule type" value="Genomic_DNA"/>
</dbReference>
<dbReference type="EMBL" id="AF206507">
    <property type="protein sequence ID" value="AAF23981.1"/>
    <property type="status" value="JOINED"/>
    <property type="molecule type" value="Genomic_DNA"/>
</dbReference>
<dbReference type="EMBL" id="AF206508">
    <property type="protein sequence ID" value="AAF23981.1"/>
    <property type="status" value="JOINED"/>
    <property type="molecule type" value="Genomic_DNA"/>
</dbReference>
<dbReference type="EMBL" id="AF206509">
    <property type="protein sequence ID" value="AAF23981.1"/>
    <property type="status" value="JOINED"/>
    <property type="molecule type" value="Genomic_DNA"/>
</dbReference>
<dbReference type="EMBL" id="BC119009">
    <property type="protein sequence ID" value="AAI19010.1"/>
    <property type="molecule type" value="mRNA"/>
</dbReference>
<dbReference type="CCDS" id="CCDS32211.1">
    <molecule id="O43548-2"/>
</dbReference>
<dbReference type="CCDS" id="CCDS32212.1">
    <molecule id="O43548-1"/>
</dbReference>
<dbReference type="RefSeq" id="NP_004236.1">
    <molecule id="O43548-2"/>
    <property type="nucleotide sequence ID" value="NM_004245.4"/>
</dbReference>
<dbReference type="RefSeq" id="NP_963925.2">
    <molecule id="O43548-1"/>
    <property type="nucleotide sequence ID" value="NM_201631.4"/>
</dbReference>
<dbReference type="SMR" id="O43548"/>
<dbReference type="BioGRID" id="114742">
    <property type="interactions" value="49"/>
</dbReference>
<dbReference type="FunCoup" id="O43548">
    <property type="interactions" value="643"/>
</dbReference>
<dbReference type="IntAct" id="O43548">
    <property type="interactions" value="29"/>
</dbReference>
<dbReference type="STRING" id="9606.ENSP00000220420"/>
<dbReference type="DrugBank" id="DB00130">
    <property type="generic name" value="L-Glutamine"/>
</dbReference>
<dbReference type="GlyGen" id="O43548">
    <property type="glycosylation" value="2 sites, 1 O-linked glycan (2 sites)"/>
</dbReference>
<dbReference type="iPTMnet" id="O43548"/>
<dbReference type="PhosphoSitePlus" id="O43548"/>
<dbReference type="BioMuta" id="TGM5"/>
<dbReference type="jPOST" id="O43548"/>
<dbReference type="MassIVE" id="O43548"/>
<dbReference type="PaxDb" id="9606-ENSP00000220420"/>
<dbReference type="PeptideAtlas" id="O43548"/>
<dbReference type="ProteomicsDB" id="49043">
    <molecule id="O43548-1"/>
</dbReference>
<dbReference type="ProteomicsDB" id="49044">
    <molecule id="O43548-2"/>
</dbReference>
<dbReference type="Antibodypedia" id="23845">
    <property type="antibodies" value="182 antibodies from 27 providers"/>
</dbReference>
<dbReference type="DNASU" id="9333"/>
<dbReference type="Ensembl" id="ENST00000220420.10">
    <molecule id="O43548-1"/>
    <property type="protein sequence ID" value="ENSP00000220420.5"/>
    <property type="gene ID" value="ENSG00000104055.17"/>
</dbReference>
<dbReference type="Ensembl" id="ENST00000349114.8">
    <molecule id="O43548-2"/>
    <property type="protein sequence ID" value="ENSP00000220419.8"/>
    <property type="gene ID" value="ENSG00000104055.17"/>
</dbReference>
<dbReference type="GeneID" id="9333"/>
<dbReference type="KEGG" id="hsa:9333"/>
<dbReference type="MANE-Select" id="ENST00000220420.10">
    <property type="protein sequence ID" value="ENSP00000220420.5"/>
    <property type="RefSeq nucleotide sequence ID" value="NM_201631.4"/>
    <property type="RefSeq protein sequence ID" value="NP_963925.2"/>
</dbReference>
<dbReference type="UCSC" id="uc001zrd.2">
    <molecule id="O43548-1"/>
    <property type="organism name" value="human"/>
</dbReference>
<dbReference type="AGR" id="HGNC:11781"/>
<dbReference type="CTD" id="9333"/>
<dbReference type="DisGeNET" id="9333"/>
<dbReference type="GeneCards" id="TGM5"/>
<dbReference type="HGNC" id="HGNC:11781">
    <property type="gene designation" value="TGM5"/>
</dbReference>
<dbReference type="HPA" id="ENSG00000104055">
    <property type="expression patterns" value="Tissue enhanced (esophagus, skin)"/>
</dbReference>
<dbReference type="MalaCards" id="TGM5"/>
<dbReference type="MIM" id="603805">
    <property type="type" value="gene"/>
</dbReference>
<dbReference type="MIM" id="609796">
    <property type="type" value="phenotype"/>
</dbReference>
<dbReference type="neXtProt" id="NX_O43548"/>
<dbReference type="OpenTargets" id="ENSG00000104055"/>
<dbReference type="Orphanet" id="263534">
    <property type="disease" value="Acral peeling skin syndrome"/>
</dbReference>
<dbReference type="PharmGKB" id="PA36494"/>
<dbReference type="VEuPathDB" id="HostDB:ENSG00000104055"/>
<dbReference type="eggNOG" id="ENOG502QTRA">
    <property type="taxonomic scope" value="Eukaryota"/>
</dbReference>
<dbReference type="GeneTree" id="ENSGT01050000244866"/>
<dbReference type="HOGENOM" id="CLU_013435_1_0_1"/>
<dbReference type="InParanoid" id="O43548"/>
<dbReference type="OMA" id="LAPFWQD"/>
<dbReference type="OrthoDB" id="437511at2759"/>
<dbReference type="PAN-GO" id="O43548">
    <property type="GO annotations" value="2 GO annotations based on evolutionary models"/>
</dbReference>
<dbReference type="PhylomeDB" id="O43548"/>
<dbReference type="TreeFam" id="TF324278"/>
<dbReference type="BRENDA" id="2.3.2.13">
    <property type="organism ID" value="2681"/>
</dbReference>
<dbReference type="PathwayCommons" id="O43548"/>
<dbReference type="Reactome" id="R-HSA-6809371">
    <property type="pathway name" value="Formation of the cornified envelope"/>
</dbReference>
<dbReference type="SignaLink" id="O43548"/>
<dbReference type="BioGRID-ORCS" id="9333">
    <property type="hits" value="7 hits in 1136 CRISPR screens"/>
</dbReference>
<dbReference type="ChiTaRS" id="TGM5">
    <property type="organism name" value="human"/>
</dbReference>
<dbReference type="GenomeRNAi" id="9333"/>
<dbReference type="Pharos" id="O43548">
    <property type="development level" value="Tbio"/>
</dbReference>
<dbReference type="PRO" id="PR:O43548"/>
<dbReference type="Proteomes" id="UP000005640">
    <property type="component" value="Chromosome 15"/>
</dbReference>
<dbReference type="RNAct" id="O43548">
    <property type="molecule type" value="protein"/>
</dbReference>
<dbReference type="Bgee" id="ENSG00000104055">
    <property type="expression patterns" value="Expressed in skin of leg and 126 other cell types or tissues"/>
</dbReference>
<dbReference type="ExpressionAtlas" id="O43548">
    <property type="expression patterns" value="baseline and differential"/>
</dbReference>
<dbReference type="GO" id="GO:0005737">
    <property type="term" value="C:cytoplasm"/>
    <property type="evidence" value="ECO:0007669"/>
    <property type="project" value="UniProtKB-SubCell"/>
</dbReference>
<dbReference type="GO" id="GO:0005886">
    <property type="term" value="C:plasma membrane"/>
    <property type="evidence" value="ECO:0000304"/>
    <property type="project" value="Reactome"/>
</dbReference>
<dbReference type="GO" id="GO:0046872">
    <property type="term" value="F:metal ion binding"/>
    <property type="evidence" value="ECO:0007669"/>
    <property type="project" value="UniProtKB-KW"/>
</dbReference>
<dbReference type="GO" id="GO:0003810">
    <property type="term" value="F:protein-glutamine gamma-glutamyltransferase activity"/>
    <property type="evidence" value="ECO:0000318"/>
    <property type="project" value="GO_Central"/>
</dbReference>
<dbReference type="GO" id="GO:0008544">
    <property type="term" value="P:epidermis development"/>
    <property type="evidence" value="ECO:0000304"/>
    <property type="project" value="ProtInc"/>
</dbReference>
<dbReference type="GO" id="GO:0036211">
    <property type="term" value="P:protein modification process"/>
    <property type="evidence" value="ECO:0000304"/>
    <property type="project" value="ProtInc"/>
</dbReference>
<dbReference type="FunFam" id="2.60.40.10:FF:000090">
    <property type="entry name" value="Protein-glutamine gamma-glutamyltransferase 2"/>
    <property type="match status" value="1"/>
</dbReference>
<dbReference type="FunFam" id="2.60.40.10:FF:000278">
    <property type="entry name" value="Protein-glutamine gamma-glutamyltransferase 2"/>
    <property type="match status" value="1"/>
</dbReference>
<dbReference type="FunFam" id="3.90.260.10:FF:000001">
    <property type="entry name" value="Protein-glutamine gamma-glutamyltransferase 2"/>
    <property type="match status" value="1"/>
</dbReference>
<dbReference type="FunFam" id="2.60.40.10:FF:000807">
    <property type="entry name" value="Protein-glutamine gamma-glutamyltransferase 5"/>
    <property type="match status" value="1"/>
</dbReference>
<dbReference type="Gene3D" id="2.60.40.10">
    <property type="entry name" value="Immunoglobulins"/>
    <property type="match status" value="3"/>
</dbReference>
<dbReference type="Gene3D" id="3.90.260.10">
    <property type="entry name" value="Transglutaminase-like"/>
    <property type="match status" value="1"/>
</dbReference>
<dbReference type="InterPro" id="IPR013783">
    <property type="entry name" value="Ig-like_fold"/>
</dbReference>
<dbReference type="InterPro" id="IPR014756">
    <property type="entry name" value="Ig_E-set"/>
</dbReference>
<dbReference type="InterPro" id="IPR038765">
    <property type="entry name" value="Papain-like_cys_pep_sf"/>
</dbReference>
<dbReference type="InterPro" id="IPR050779">
    <property type="entry name" value="Transglutaminase"/>
</dbReference>
<dbReference type="InterPro" id="IPR002931">
    <property type="entry name" value="Transglutaminase-like"/>
</dbReference>
<dbReference type="InterPro" id="IPR036985">
    <property type="entry name" value="Transglutaminase-like_sf"/>
</dbReference>
<dbReference type="InterPro" id="IPR023608">
    <property type="entry name" value="Transglutaminase_animal"/>
</dbReference>
<dbReference type="InterPro" id="IPR013808">
    <property type="entry name" value="Transglutaminase_AS"/>
</dbReference>
<dbReference type="InterPro" id="IPR008958">
    <property type="entry name" value="Transglutaminase_C"/>
</dbReference>
<dbReference type="InterPro" id="IPR036238">
    <property type="entry name" value="Transglutaminase_C_sf"/>
</dbReference>
<dbReference type="InterPro" id="IPR001102">
    <property type="entry name" value="Transglutaminase_N"/>
</dbReference>
<dbReference type="PANTHER" id="PTHR11590">
    <property type="entry name" value="PROTEIN-GLUTAMINE GAMMA-GLUTAMYLTRANSFERASE"/>
    <property type="match status" value="1"/>
</dbReference>
<dbReference type="PANTHER" id="PTHR11590:SF38">
    <property type="entry name" value="PROTEIN-GLUTAMINE GAMMA-GLUTAMYLTRANSFERASE 5"/>
    <property type="match status" value="1"/>
</dbReference>
<dbReference type="Pfam" id="PF00927">
    <property type="entry name" value="Transglut_C"/>
    <property type="match status" value="2"/>
</dbReference>
<dbReference type="Pfam" id="PF01841">
    <property type="entry name" value="Transglut_core"/>
    <property type="match status" value="1"/>
</dbReference>
<dbReference type="Pfam" id="PF00868">
    <property type="entry name" value="Transglut_N"/>
    <property type="match status" value="1"/>
</dbReference>
<dbReference type="PIRSF" id="PIRSF000459">
    <property type="entry name" value="TGM_EBP42"/>
    <property type="match status" value="1"/>
</dbReference>
<dbReference type="SMART" id="SM00460">
    <property type="entry name" value="TGc"/>
    <property type="match status" value="1"/>
</dbReference>
<dbReference type="SUPFAM" id="SSF54001">
    <property type="entry name" value="Cysteine proteinases"/>
    <property type="match status" value="1"/>
</dbReference>
<dbReference type="SUPFAM" id="SSF81296">
    <property type="entry name" value="E set domains"/>
    <property type="match status" value="1"/>
</dbReference>
<dbReference type="SUPFAM" id="SSF49309">
    <property type="entry name" value="Transglutaminase, two C-terminal domains"/>
    <property type="match status" value="2"/>
</dbReference>
<dbReference type="PROSITE" id="PS00547">
    <property type="entry name" value="TRANSGLUTAMINASES"/>
    <property type="match status" value="1"/>
</dbReference>
<comment type="function">
    <text>Catalyzes the cross-linking of proteins and the conjugation of polyamines to proteins. Contributes to the formation of the cornified cell envelope of keratinocytes.</text>
</comment>
<comment type="catalytic activity">
    <reaction evidence="2">
        <text>L-glutaminyl-[protein] + L-lysyl-[protein] = [protein]-L-lysyl-N(6)-5-L-glutamyl-[protein] + NH4(+)</text>
        <dbReference type="Rhea" id="RHEA:54816"/>
        <dbReference type="Rhea" id="RHEA-COMP:9752"/>
        <dbReference type="Rhea" id="RHEA-COMP:10207"/>
        <dbReference type="Rhea" id="RHEA-COMP:14005"/>
        <dbReference type="ChEBI" id="CHEBI:28938"/>
        <dbReference type="ChEBI" id="CHEBI:29969"/>
        <dbReference type="ChEBI" id="CHEBI:30011"/>
        <dbReference type="ChEBI" id="CHEBI:138370"/>
        <dbReference type="EC" id="2.3.2.13"/>
    </reaction>
</comment>
<comment type="cofactor">
    <cofactor evidence="1">
        <name>Ca(2+)</name>
        <dbReference type="ChEBI" id="CHEBI:29108"/>
    </cofactor>
    <text evidence="1">Binds 1 Ca(2+) ion per subunit.</text>
</comment>
<comment type="interaction">
    <interactant intactId="EBI-12027348">
        <id>O43548</id>
    </interactant>
    <interactant intactId="EBI-718729">
        <id>P55212</id>
        <label>CASP6</label>
    </interactant>
    <organismsDiffer>false</organismsDiffer>
    <experiments>3</experiments>
</comment>
<comment type="interaction">
    <interactant intactId="EBI-12027348">
        <id>O43548</id>
    </interactant>
    <interactant intactId="EBI-11991632">
        <id>Q14451-3</id>
        <label>GRB7</label>
    </interactant>
    <organismsDiffer>false</organismsDiffer>
    <experiments>3</experiments>
</comment>
<comment type="interaction">
    <interactant intactId="EBI-12027348">
        <id>O43548</id>
    </interactant>
    <interactant intactId="EBI-473886">
        <id>O00291</id>
        <label>HIP1</label>
    </interactant>
    <organismsDiffer>false</organismsDiffer>
    <experiments>3</experiments>
</comment>
<comment type="interaction">
    <interactant intactId="EBI-12027348">
        <id>O43548</id>
    </interactant>
    <interactant intactId="EBI-2556193">
        <id>Q63ZY3</id>
        <label>KANK2</label>
    </interactant>
    <organismsDiffer>false</organismsDiffer>
    <experiments>3</experiments>
</comment>
<comment type="interaction">
    <interactant intactId="EBI-12027348">
        <id>O43548</id>
    </interactant>
    <interactant intactId="EBI-21591415">
        <id>P13473-2</id>
        <label>LAMP2</label>
    </interactant>
    <organismsDiffer>false</organismsDiffer>
    <experiments>3</experiments>
</comment>
<comment type="interaction">
    <interactant intactId="EBI-12027348">
        <id>O43548</id>
    </interactant>
    <interactant intactId="EBI-12079790">
        <id>Q6P4E2</id>
        <label>LARP4</label>
    </interactant>
    <organismsDiffer>false</organismsDiffer>
    <experiments>3</experiments>
</comment>
<comment type="interaction">
    <interactant intactId="EBI-12027348">
        <id>O43548</id>
    </interactant>
    <interactant intactId="EBI-357504">
        <id>P47929</id>
        <label>LGALS7B</label>
    </interactant>
    <organismsDiffer>false</organismsDiffer>
    <experiments>3</experiments>
</comment>
<comment type="interaction">
    <interactant intactId="EBI-12027348">
        <id>O43548</id>
    </interactant>
    <interactant intactId="EBI-5280197">
        <id>O75400-2</id>
        <label>PRPF40A</label>
    </interactant>
    <organismsDiffer>false</organismsDiffer>
    <experiments>3</experiments>
</comment>
<comment type="interaction">
    <interactant intactId="EBI-12027348">
        <id>O43548</id>
    </interactant>
    <interactant intactId="EBI-740773">
        <id>Q96IZ5</id>
        <label>RBM41</label>
    </interactant>
    <organismsDiffer>false</organismsDiffer>
    <experiments>3</experiments>
</comment>
<comment type="subcellular location">
    <subcellularLocation>
        <location evidence="5">Cytoplasm</location>
    </subcellularLocation>
    <text>Associated with intermediate filaments.</text>
</comment>
<comment type="alternative products">
    <event type="alternative splicing"/>
    <isoform>
        <id>O43548-1</id>
        <name>Long</name>
        <sequence type="displayed"/>
    </isoform>
    <isoform>
        <id>O43548-2</id>
        <name>Short</name>
        <sequence type="described" ref="VSP_006415"/>
    </isoform>
</comment>
<comment type="tissue specificity">
    <text>Expressed in foreskin keratinocytes.</text>
</comment>
<comment type="induction">
    <text evidence="5">By 12-O-tetradecanoylphorbol-13-acetate (TPA) and calcium in NHEK cells.</text>
</comment>
<comment type="disease" evidence="6">
    <disease id="DI-02148">
        <name>Peeling skin syndrome 2</name>
        <acronym>PSS2</acronym>
        <description>A non-inflammatory and localized form of peeling skin syndrome, a genodermatosis characterized by the continuous shedding of the outer layers of the epidermis. In PSS2 patients, skin peeling is painless and strictly limited to the dorsa of the hands and feet. It is accompanied by painless erythema and spontaneous non-scarring healing. Ultrastructural and histological analysis shows a level of blistering high in the epidermis at the stratum granulosum-stratum corneum junction.</description>
        <dbReference type="MIM" id="609796"/>
    </disease>
    <text>The disease is caused by variants affecting the gene represented in this entry.</text>
</comment>
<comment type="similarity">
    <text evidence="8">Belongs to the transglutaminase superfamily. Transglutaminase family.</text>
</comment>
<feature type="initiator methionine" description="Removed" evidence="5">
    <location>
        <position position="1"/>
    </location>
</feature>
<feature type="chain" id="PRO_0000213713" description="Protein-glutamine gamma-glutamyltransferase 5">
    <location>
        <begin position="2"/>
        <end position="720"/>
    </location>
</feature>
<feature type="region of interest" description="Disordered" evidence="3">
    <location>
        <begin position="470"/>
        <end position="499"/>
    </location>
</feature>
<feature type="compositionally biased region" description="Polar residues" evidence="3">
    <location>
        <begin position="481"/>
        <end position="496"/>
    </location>
</feature>
<feature type="active site" evidence="2">
    <location>
        <position position="278"/>
    </location>
</feature>
<feature type="active site" evidence="2">
    <location>
        <position position="337"/>
    </location>
</feature>
<feature type="active site" evidence="2">
    <location>
        <position position="360"/>
    </location>
</feature>
<feature type="binding site" evidence="1">
    <location>
        <position position="400"/>
    </location>
    <ligand>
        <name>Ca(2+)</name>
        <dbReference type="ChEBI" id="CHEBI:29108"/>
    </ligand>
</feature>
<feature type="binding site" evidence="1">
    <location>
        <position position="402"/>
    </location>
    <ligand>
        <name>Ca(2+)</name>
        <dbReference type="ChEBI" id="CHEBI:29108"/>
    </ligand>
</feature>
<feature type="binding site" evidence="1">
    <location>
        <position position="448"/>
    </location>
    <ligand>
        <name>Ca(2+)</name>
        <dbReference type="ChEBI" id="CHEBI:29108"/>
    </ligand>
</feature>
<feature type="binding site" evidence="1">
    <location>
        <position position="453"/>
    </location>
    <ligand>
        <name>Ca(2+)</name>
        <dbReference type="ChEBI" id="CHEBI:29108"/>
    </ligand>
</feature>
<feature type="modified residue" description="N-acetylalanine" evidence="5">
    <location>
        <position position="2"/>
    </location>
</feature>
<feature type="splice variant" id="VSP_006415" description="In isoform Short." evidence="7">
    <location>
        <begin position="64"/>
        <end position="145"/>
    </location>
</feature>
<feature type="sequence variant" id="VAR_013248" description="In dbSNP:rs757598618." evidence="4">
    <original>P</original>
    <variation>S</variation>
    <location>
        <position position="67"/>
    </location>
</feature>
<feature type="sequence variant" id="VAR_025848" description="In dbSNP:rs113463533." evidence="6">
    <original>T</original>
    <variation>M</variation>
    <location>
        <position position="109"/>
    </location>
</feature>
<feature type="sequence variant" id="VAR_025849" description="In PSS2; completely abolishes the enzyme activity; dbSNP:rs112292549." evidence="6">
    <original>G</original>
    <variation>C</variation>
    <location>
        <position position="113"/>
    </location>
</feature>
<feature type="sequence variant" id="VAR_013249" description="In dbSNP:rs28756768." evidence="4">
    <original>A</original>
    <variation>G</variation>
    <location>
        <position position="352"/>
    </location>
</feature>
<feature type="sequence variant" id="VAR_052564" description="In dbSNP:rs7171797.">
    <original>V</original>
    <variation>M</variation>
    <location>
        <position position="504"/>
    </location>
</feature>
<feature type="sequence variant" id="VAR_052565" description="In dbSNP:rs35985214.">
    <original>Q</original>
    <variation>R</variation>
    <location>
        <position position="521"/>
    </location>
</feature>
<protein>
    <recommendedName>
        <fullName>Protein-glutamine gamma-glutamyltransferase 5</fullName>
        <ecNumber>2.3.2.13</ecNumber>
    </recommendedName>
    <alternativeName>
        <fullName>Transglutaminase X</fullName>
        <shortName>TG(X)</shortName>
        <shortName>TGX</shortName>
        <shortName>TGase X</shortName>
    </alternativeName>
    <alternativeName>
        <fullName>Transglutaminase-5</fullName>
        <shortName>TGase-5</shortName>
    </alternativeName>
</protein>
<gene>
    <name type="primary">TGM5</name>
    <name type="synonym">TGMX</name>
</gene>
<organism>
    <name type="scientific">Homo sapiens</name>
    <name type="common">Human</name>
    <dbReference type="NCBI Taxonomy" id="9606"/>
    <lineage>
        <taxon>Eukaryota</taxon>
        <taxon>Metazoa</taxon>
        <taxon>Chordata</taxon>
        <taxon>Craniata</taxon>
        <taxon>Vertebrata</taxon>
        <taxon>Euteleostomi</taxon>
        <taxon>Mammalia</taxon>
        <taxon>Eutheria</taxon>
        <taxon>Euarchontoglires</taxon>
        <taxon>Primates</taxon>
        <taxon>Haplorrhini</taxon>
        <taxon>Catarrhini</taxon>
        <taxon>Hominidae</taxon>
        <taxon>Homo</taxon>
    </lineage>
</organism>